<name>RL9_GEODF</name>
<sequence>MKVILKENLDNLGHIGDIVKVAPGYARNYLLPKGLALEATTKNAKALDHAKKHLEYKKNKVLEQARQFAARIEGIALTLSHQAGEEGKLFGAVTNMELAENLKAQGVEIDRKKIVLAEPIKQVGDFTAIIKIHPEVNATLKVTVTKA</sequence>
<organism>
    <name type="scientific">Geotalea daltonii (strain DSM 22248 / JCM 15807 / FRC-32)</name>
    <name type="common">Geobacter daltonii</name>
    <dbReference type="NCBI Taxonomy" id="316067"/>
    <lineage>
        <taxon>Bacteria</taxon>
        <taxon>Pseudomonadati</taxon>
        <taxon>Thermodesulfobacteriota</taxon>
        <taxon>Desulfuromonadia</taxon>
        <taxon>Geobacterales</taxon>
        <taxon>Geobacteraceae</taxon>
        <taxon>Geotalea</taxon>
    </lineage>
</organism>
<gene>
    <name evidence="1" type="primary">rplI</name>
    <name type="ordered locus">Geob_1574</name>
</gene>
<comment type="function">
    <text evidence="1">Binds to the 23S rRNA.</text>
</comment>
<comment type="similarity">
    <text evidence="1">Belongs to the bacterial ribosomal protein bL9 family.</text>
</comment>
<feature type="chain" id="PRO_1000196246" description="Large ribosomal subunit protein bL9">
    <location>
        <begin position="1"/>
        <end position="147"/>
    </location>
</feature>
<reference key="1">
    <citation type="submission" date="2009-01" db="EMBL/GenBank/DDBJ databases">
        <title>Complete sequence of Geobacter sp. FRC-32.</title>
        <authorList>
            <consortium name="US DOE Joint Genome Institute"/>
            <person name="Lucas S."/>
            <person name="Copeland A."/>
            <person name="Lapidus A."/>
            <person name="Glavina del Rio T."/>
            <person name="Dalin E."/>
            <person name="Tice H."/>
            <person name="Bruce D."/>
            <person name="Goodwin L."/>
            <person name="Pitluck S."/>
            <person name="Saunders E."/>
            <person name="Brettin T."/>
            <person name="Detter J.C."/>
            <person name="Han C."/>
            <person name="Larimer F."/>
            <person name="Land M."/>
            <person name="Hauser L."/>
            <person name="Kyrpides N."/>
            <person name="Ovchinnikova G."/>
            <person name="Kostka J."/>
            <person name="Richardson P."/>
        </authorList>
    </citation>
    <scope>NUCLEOTIDE SEQUENCE [LARGE SCALE GENOMIC DNA]</scope>
    <source>
        <strain>DSM 22248 / JCM 15807 / FRC-32</strain>
    </source>
</reference>
<protein>
    <recommendedName>
        <fullName evidence="1">Large ribosomal subunit protein bL9</fullName>
    </recommendedName>
    <alternativeName>
        <fullName evidence="2">50S ribosomal protein L9</fullName>
    </alternativeName>
</protein>
<evidence type="ECO:0000255" key="1">
    <source>
        <dbReference type="HAMAP-Rule" id="MF_00503"/>
    </source>
</evidence>
<evidence type="ECO:0000305" key="2"/>
<keyword id="KW-1185">Reference proteome</keyword>
<keyword id="KW-0687">Ribonucleoprotein</keyword>
<keyword id="KW-0689">Ribosomal protein</keyword>
<keyword id="KW-0694">RNA-binding</keyword>
<keyword id="KW-0699">rRNA-binding</keyword>
<dbReference type="EMBL" id="CP001390">
    <property type="protein sequence ID" value="ACM19932.1"/>
    <property type="molecule type" value="Genomic_DNA"/>
</dbReference>
<dbReference type="RefSeq" id="WP_012646661.1">
    <property type="nucleotide sequence ID" value="NC_011979.1"/>
</dbReference>
<dbReference type="SMR" id="B9M5V1"/>
<dbReference type="STRING" id="316067.Geob_1574"/>
<dbReference type="KEGG" id="geo:Geob_1574"/>
<dbReference type="eggNOG" id="COG0359">
    <property type="taxonomic scope" value="Bacteria"/>
</dbReference>
<dbReference type="HOGENOM" id="CLU_078938_3_0_7"/>
<dbReference type="OrthoDB" id="9788336at2"/>
<dbReference type="Proteomes" id="UP000007721">
    <property type="component" value="Chromosome"/>
</dbReference>
<dbReference type="GO" id="GO:1990904">
    <property type="term" value="C:ribonucleoprotein complex"/>
    <property type="evidence" value="ECO:0007669"/>
    <property type="project" value="UniProtKB-KW"/>
</dbReference>
<dbReference type="GO" id="GO:0005840">
    <property type="term" value="C:ribosome"/>
    <property type="evidence" value="ECO:0007669"/>
    <property type="project" value="UniProtKB-KW"/>
</dbReference>
<dbReference type="GO" id="GO:0019843">
    <property type="term" value="F:rRNA binding"/>
    <property type="evidence" value="ECO:0007669"/>
    <property type="project" value="UniProtKB-UniRule"/>
</dbReference>
<dbReference type="GO" id="GO:0003735">
    <property type="term" value="F:structural constituent of ribosome"/>
    <property type="evidence" value="ECO:0007669"/>
    <property type="project" value="InterPro"/>
</dbReference>
<dbReference type="GO" id="GO:0006412">
    <property type="term" value="P:translation"/>
    <property type="evidence" value="ECO:0007669"/>
    <property type="project" value="UniProtKB-UniRule"/>
</dbReference>
<dbReference type="FunFam" id="3.10.430.100:FF:000006">
    <property type="entry name" value="50S ribosomal protein L9"/>
    <property type="match status" value="1"/>
</dbReference>
<dbReference type="FunFam" id="3.40.5.10:FF:000003">
    <property type="entry name" value="50S ribosomal protein L9"/>
    <property type="match status" value="1"/>
</dbReference>
<dbReference type="Gene3D" id="3.10.430.100">
    <property type="entry name" value="Ribosomal protein L9, C-terminal domain"/>
    <property type="match status" value="1"/>
</dbReference>
<dbReference type="Gene3D" id="3.40.5.10">
    <property type="entry name" value="Ribosomal protein L9, N-terminal domain"/>
    <property type="match status" value="1"/>
</dbReference>
<dbReference type="HAMAP" id="MF_00503">
    <property type="entry name" value="Ribosomal_bL9"/>
    <property type="match status" value="1"/>
</dbReference>
<dbReference type="InterPro" id="IPR000244">
    <property type="entry name" value="Ribosomal_bL9"/>
</dbReference>
<dbReference type="InterPro" id="IPR009027">
    <property type="entry name" value="Ribosomal_bL9/RNase_H1_N"/>
</dbReference>
<dbReference type="InterPro" id="IPR020594">
    <property type="entry name" value="Ribosomal_bL9_bac/chp"/>
</dbReference>
<dbReference type="InterPro" id="IPR020069">
    <property type="entry name" value="Ribosomal_bL9_C"/>
</dbReference>
<dbReference type="InterPro" id="IPR036791">
    <property type="entry name" value="Ribosomal_bL9_C_sf"/>
</dbReference>
<dbReference type="InterPro" id="IPR020070">
    <property type="entry name" value="Ribosomal_bL9_N"/>
</dbReference>
<dbReference type="InterPro" id="IPR036935">
    <property type="entry name" value="Ribosomal_bL9_N_sf"/>
</dbReference>
<dbReference type="NCBIfam" id="TIGR00158">
    <property type="entry name" value="L9"/>
    <property type="match status" value="1"/>
</dbReference>
<dbReference type="PANTHER" id="PTHR21368">
    <property type="entry name" value="50S RIBOSOMAL PROTEIN L9"/>
    <property type="match status" value="1"/>
</dbReference>
<dbReference type="Pfam" id="PF03948">
    <property type="entry name" value="Ribosomal_L9_C"/>
    <property type="match status" value="1"/>
</dbReference>
<dbReference type="Pfam" id="PF01281">
    <property type="entry name" value="Ribosomal_L9_N"/>
    <property type="match status" value="1"/>
</dbReference>
<dbReference type="SUPFAM" id="SSF55658">
    <property type="entry name" value="L9 N-domain-like"/>
    <property type="match status" value="1"/>
</dbReference>
<dbReference type="SUPFAM" id="SSF55653">
    <property type="entry name" value="Ribosomal protein L9 C-domain"/>
    <property type="match status" value="1"/>
</dbReference>
<dbReference type="PROSITE" id="PS00651">
    <property type="entry name" value="RIBOSOMAL_L9"/>
    <property type="match status" value="1"/>
</dbReference>
<proteinExistence type="inferred from homology"/>
<accession>B9M5V1</accession>